<comment type="function">
    <text evidence="1">Participates in chromosomal partition during cell division. May act via the formation of a condensin-like complex containing Smc and ScpB that pull DNA away from mid-cell into both cell halves.</text>
</comment>
<comment type="subunit">
    <text evidence="1">Component of a cohesin-like complex composed of ScpA, ScpB and the Smc homodimer, in which ScpA and ScpB bind to the head domain of Smc. The presence of the three proteins is required for the association of the complex with DNA.</text>
</comment>
<comment type="subcellular location">
    <subcellularLocation>
        <location evidence="1">Cytoplasm</location>
    </subcellularLocation>
    <text evidence="1">Associated with two foci at the outer edges of the nucleoid region in young cells, and at four foci within both cell halves in older cells.</text>
</comment>
<comment type="similarity">
    <text evidence="1">Belongs to the ScpA family.</text>
</comment>
<comment type="sequence caution" evidence="2">
    <conflict type="erroneous initiation">
        <sequence resource="EMBL-CDS" id="AAO90575"/>
    </conflict>
</comment>
<dbReference type="EMBL" id="AE016828">
    <property type="protein sequence ID" value="AAO90575.2"/>
    <property type="status" value="ALT_INIT"/>
    <property type="molecule type" value="Genomic_DNA"/>
</dbReference>
<dbReference type="RefSeq" id="NP_820061.2">
    <property type="nucleotide sequence ID" value="NC_002971.3"/>
</dbReference>
<dbReference type="RefSeq" id="WP_010957979.1">
    <property type="nucleotide sequence ID" value="NC_002971.4"/>
</dbReference>
<dbReference type="SMR" id="Q83CP8"/>
<dbReference type="STRING" id="227377.CBU_1061"/>
<dbReference type="EnsemblBacteria" id="AAO90575">
    <property type="protein sequence ID" value="AAO90575"/>
    <property type="gene ID" value="CBU_1061"/>
</dbReference>
<dbReference type="GeneID" id="1208962"/>
<dbReference type="KEGG" id="cbu:CBU_1061"/>
<dbReference type="PATRIC" id="fig|227377.7.peg.1052"/>
<dbReference type="eggNOG" id="COG1354">
    <property type="taxonomic scope" value="Bacteria"/>
</dbReference>
<dbReference type="HOGENOM" id="CLU_038686_0_1_6"/>
<dbReference type="OrthoDB" id="9811016at2"/>
<dbReference type="Proteomes" id="UP000002671">
    <property type="component" value="Chromosome"/>
</dbReference>
<dbReference type="GO" id="GO:0005737">
    <property type="term" value="C:cytoplasm"/>
    <property type="evidence" value="ECO:0007669"/>
    <property type="project" value="UniProtKB-SubCell"/>
</dbReference>
<dbReference type="GO" id="GO:0051301">
    <property type="term" value="P:cell division"/>
    <property type="evidence" value="ECO:0007669"/>
    <property type="project" value="UniProtKB-KW"/>
</dbReference>
<dbReference type="GO" id="GO:0007059">
    <property type="term" value="P:chromosome segregation"/>
    <property type="evidence" value="ECO:0007669"/>
    <property type="project" value="UniProtKB-UniRule"/>
</dbReference>
<dbReference type="GO" id="GO:0006260">
    <property type="term" value="P:DNA replication"/>
    <property type="evidence" value="ECO:0007669"/>
    <property type="project" value="UniProtKB-UniRule"/>
</dbReference>
<dbReference type="Gene3D" id="6.10.250.2410">
    <property type="match status" value="1"/>
</dbReference>
<dbReference type="Gene3D" id="1.10.10.580">
    <property type="entry name" value="Structural maintenance of chromosome 1. Chain E"/>
    <property type="match status" value="1"/>
</dbReference>
<dbReference type="HAMAP" id="MF_01805">
    <property type="entry name" value="ScpA"/>
    <property type="match status" value="1"/>
</dbReference>
<dbReference type="InterPro" id="IPR003768">
    <property type="entry name" value="ScpA"/>
</dbReference>
<dbReference type="InterPro" id="IPR023093">
    <property type="entry name" value="ScpA-like_C"/>
</dbReference>
<dbReference type="PANTHER" id="PTHR33969">
    <property type="entry name" value="SEGREGATION AND CONDENSATION PROTEIN A"/>
    <property type="match status" value="1"/>
</dbReference>
<dbReference type="PANTHER" id="PTHR33969:SF2">
    <property type="entry name" value="SEGREGATION AND CONDENSATION PROTEIN A"/>
    <property type="match status" value="1"/>
</dbReference>
<dbReference type="Pfam" id="PF02616">
    <property type="entry name" value="SMC_ScpA"/>
    <property type="match status" value="1"/>
</dbReference>
<accession>Q83CP8</accession>
<sequence length="266" mass="30441">MENQEVVNQLAGFEVKVSGQPLSKLPEDLYIPPDALRVFLEAFEGPLDLLLYLIKKHNIDILDIPIAEITRQYMQFVDLMREMRIELAAEYLVMAAMLAEIKSRLLLPRPVVEEENEQDPRAELVRRLQEYERYKKAAYDLDQLPRVGRDTFIADAAVPPMNTAKIHPTAELPELLNALKDVLQRASLYNAHSIAREPLSIRERMSRILSLVDKENFIAFTRLFTVEEGRMGVVVTLIATLELIRQSVIELVQAEPFALIHIRAKG</sequence>
<proteinExistence type="inferred from homology"/>
<name>SCPA_COXBU</name>
<keyword id="KW-0131">Cell cycle</keyword>
<keyword id="KW-0132">Cell division</keyword>
<keyword id="KW-0159">Chromosome partition</keyword>
<keyword id="KW-0963">Cytoplasm</keyword>
<keyword id="KW-1185">Reference proteome</keyword>
<reference key="1">
    <citation type="journal article" date="2003" name="Proc. Natl. Acad. Sci. U.S.A.">
        <title>Complete genome sequence of the Q-fever pathogen, Coxiella burnetii.</title>
        <authorList>
            <person name="Seshadri R."/>
            <person name="Paulsen I.T."/>
            <person name="Eisen J.A."/>
            <person name="Read T.D."/>
            <person name="Nelson K.E."/>
            <person name="Nelson W.C."/>
            <person name="Ward N.L."/>
            <person name="Tettelin H."/>
            <person name="Davidsen T.M."/>
            <person name="Beanan M.J."/>
            <person name="DeBoy R.T."/>
            <person name="Daugherty S.C."/>
            <person name="Brinkac L.M."/>
            <person name="Madupu R."/>
            <person name="Dodson R.J."/>
            <person name="Khouri H.M."/>
            <person name="Lee K.H."/>
            <person name="Carty H.A."/>
            <person name="Scanlan D."/>
            <person name="Heinzen R.A."/>
            <person name="Thompson H.A."/>
            <person name="Samuel J.E."/>
            <person name="Fraser C.M."/>
            <person name="Heidelberg J.F."/>
        </authorList>
    </citation>
    <scope>NUCLEOTIDE SEQUENCE [LARGE SCALE GENOMIC DNA]</scope>
    <source>
        <strain>RSA 493 / Nine Mile phase I</strain>
    </source>
</reference>
<protein>
    <recommendedName>
        <fullName evidence="1">Segregation and condensation protein A</fullName>
    </recommendedName>
</protein>
<evidence type="ECO:0000255" key="1">
    <source>
        <dbReference type="HAMAP-Rule" id="MF_01805"/>
    </source>
</evidence>
<evidence type="ECO:0000305" key="2"/>
<feature type="chain" id="PRO_0000244642" description="Segregation and condensation protein A">
    <location>
        <begin position="1"/>
        <end position="266"/>
    </location>
</feature>
<gene>
    <name evidence="1" type="primary">scpA</name>
    <name type="ordered locus">CBU_1061</name>
</gene>
<organism>
    <name type="scientific">Coxiella burnetii (strain RSA 493 / Nine Mile phase I)</name>
    <dbReference type="NCBI Taxonomy" id="227377"/>
    <lineage>
        <taxon>Bacteria</taxon>
        <taxon>Pseudomonadati</taxon>
        <taxon>Pseudomonadota</taxon>
        <taxon>Gammaproteobacteria</taxon>
        <taxon>Legionellales</taxon>
        <taxon>Coxiellaceae</taxon>
        <taxon>Coxiella</taxon>
    </lineage>
</organism>